<organism>
    <name type="scientific">Teredinibacter turnerae (strain ATCC 39867 / T7901)</name>
    <dbReference type="NCBI Taxonomy" id="377629"/>
    <lineage>
        <taxon>Bacteria</taxon>
        <taxon>Pseudomonadati</taxon>
        <taxon>Pseudomonadota</taxon>
        <taxon>Gammaproteobacteria</taxon>
        <taxon>Cellvibrionales</taxon>
        <taxon>Cellvibrionaceae</taxon>
        <taxon>Teredinibacter</taxon>
    </lineage>
</organism>
<sequence length="248" mass="28316">MYKLVLIRHGESQWNLENRFTGWHDVDLTDTGREQARNGGRMLKEAGFEFDLAYSSVLTRAIRTLNLVLEEMGQMWLPVERHWRLNERHYGALTGLDKAETAAKHGDEQVKIWRRSFDVPPPDVDESSEHFPAHDPRYRGIDKNVLPKAESLKLTIDRVLPYWHDVIRPSILGGKRVIIAAHGNSLRALVKYLDDMSDAEILDLNIPTGVPLVYDLDADLRPIKREYLGDPEAIKAMMDAVAKQGQAK</sequence>
<gene>
    <name evidence="1" type="primary">gpmA</name>
    <name type="ordered locus">TERTU_4427</name>
</gene>
<evidence type="ECO:0000255" key="1">
    <source>
        <dbReference type="HAMAP-Rule" id="MF_01039"/>
    </source>
</evidence>
<accession>C5BJ25</accession>
<name>GPMA_TERTT</name>
<reference key="1">
    <citation type="journal article" date="2009" name="PLoS ONE">
        <title>The complete genome of Teredinibacter turnerae T7901: an intracellular endosymbiont of marine wood-boring bivalves (shipworms).</title>
        <authorList>
            <person name="Yang J.C."/>
            <person name="Madupu R."/>
            <person name="Durkin A.S."/>
            <person name="Ekborg N.A."/>
            <person name="Pedamallu C.S."/>
            <person name="Hostetler J.B."/>
            <person name="Radune D."/>
            <person name="Toms B.S."/>
            <person name="Henrissat B."/>
            <person name="Coutinho P.M."/>
            <person name="Schwarz S."/>
            <person name="Field L."/>
            <person name="Trindade-Silva A.E."/>
            <person name="Soares C.A.G."/>
            <person name="Elshahawi S."/>
            <person name="Hanora A."/>
            <person name="Schmidt E.W."/>
            <person name="Haygood M.G."/>
            <person name="Posfai J."/>
            <person name="Benner J."/>
            <person name="Madinger C."/>
            <person name="Nove J."/>
            <person name="Anton B."/>
            <person name="Chaudhary K."/>
            <person name="Foster J."/>
            <person name="Holman A."/>
            <person name="Kumar S."/>
            <person name="Lessard P.A."/>
            <person name="Luyten Y.A."/>
            <person name="Slatko B."/>
            <person name="Wood N."/>
            <person name="Wu B."/>
            <person name="Teplitski M."/>
            <person name="Mougous J.D."/>
            <person name="Ward N."/>
            <person name="Eisen J.A."/>
            <person name="Badger J.H."/>
            <person name="Distel D.L."/>
        </authorList>
    </citation>
    <scope>NUCLEOTIDE SEQUENCE [LARGE SCALE GENOMIC DNA]</scope>
    <source>
        <strain>ATCC 39867 / T7901</strain>
    </source>
</reference>
<comment type="function">
    <text evidence="1">Catalyzes the interconversion of 2-phosphoglycerate and 3-phosphoglycerate.</text>
</comment>
<comment type="catalytic activity">
    <reaction evidence="1">
        <text>(2R)-2-phosphoglycerate = (2R)-3-phosphoglycerate</text>
        <dbReference type="Rhea" id="RHEA:15901"/>
        <dbReference type="ChEBI" id="CHEBI:58272"/>
        <dbReference type="ChEBI" id="CHEBI:58289"/>
        <dbReference type="EC" id="5.4.2.11"/>
    </reaction>
</comment>
<comment type="pathway">
    <text evidence="1">Carbohydrate degradation; glycolysis; pyruvate from D-glyceraldehyde 3-phosphate: step 3/5.</text>
</comment>
<comment type="subunit">
    <text evidence="1">Homodimer.</text>
</comment>
<comment type="similarity">
    <text evidence="1">Belongs to the phosphoglycerate mutase family. BPG-dependent PGAM subfamily.</text>
</comment>
<protein>
    <recommendedName>
        <fullName evidence="1">2,3-bisphosphoglycerate-dependent phosphoglycerate mutase</fullName>
        <shortName evidence="1">BPG-dependent PGAM</shortName>
        <shortName evidence="1">PGAM</shortName>
        <shortName evidence="1">Phosphoglyceromutase</shortName>
        <shortName evidence="1">dPGM</shortName>
        <ecNumber evidence="1">5.4.2.11</ecNumber>
    </recommendedName>
</protein>
<feature type="chain" id="PRO_1000213395" description="2,3-bisphosphoglycerate-dependent phosphoglycerate mutase">
    <location>
        <begin position="1"/>
        <end position="248"/>
    </location>
</feature>
<feature type="active site" description="Tele-phosphohistidine intermediate" evidence="1">
    <location>
        <position position="9"/>
    </location>
</feature>
<feature type="active site" description="Proton donor/acceptor" evidence="1">
    <location>
        <position position="87"/>
    </location>
</feature>
<feature type="binding site" evidence="1">
    <location>
        <begin position="8"/>
        <end position="15"/>
    </location>
    <ligand>
        <name>substrate</name>
    </ligand>
</feature>
<feature type="binding site" evidence="1">
    <location>
        <begin position="21"/>
        <end position="22"/>
    </location>
    <ligand>
        <name>substrate</name>
    </ligand>
</feature>
<feature type="binding site" evidence="1">
    <location>
        <position position="60"/>
    </location>
    <ligand>
        <name>substrate</name>
    </ligand>
</feature>
<feature type="binding site" evidence="1">
    <location>
        <begin position="87"/>
        <end position="90"/>
    </location>
    <ligand>
        <name>substrate</name>
    </ligand>
</feature>
<feature type="binding site" evidence="1">
    <location>
        <position position="98"/>
    </location>
    <ligand>
        <name>substrate</name>
    </ligand>
</feature>
<feature type="binding site" evidence="1">
    <location>
        <begin position="114"/>
        <end position="115"/>
    </location>
    <ligand>
        <name>substrate</name>
    </ligand>
</feature>
<feature type="binding site" evidence="1">
    <location>
        <begin position="183"/>
        <end position="184"/>
    </location>
    <ligand>
        <name>substrate</name>
    </ligand>
</feature>
<feature type="site" description="Transition state stabilizer" evidence="1">
    <location>
        <position position="182"/>
    </location>
</feature>
<dbReference type="EC" id="5.4.2.11" evidence="1"/>
<dbReference type="EMBL" id="CP001614">
    <property type="protein sequence ID" value="ACR14463.1"/>
    <property type="molecule type" value="Genomic_DNA"/>
</dbReference>
<dbReference type="RefSeq" id="WP_015820577.1">
    <property type="nucleotide sequence ID" value="NC_012997.1"/>
</dbReference>
<dbReference type="SMR" id="C5BJ25"/>
<dbReference type="STRING" id="377629.TERTU_4427"/>
<dbReference type="GeneID" id="58407671"/>
<dbReference type="GeneID" id="93854486"/>
<dbReference type="KEGG" id="ttu:TERTU_4427"/>
<dbReference type="eggNOG" id="COG0588">
    <property type="taxonomic scope" value="Bacteria"/>
</dbReference>
<dbReference type="HOGENOM" id="CLU_033323_1_1_6"/>
<dbReference type="OrthoDB" id="9781415at2"/>
<dbReference type="UniPathway" id="UPA00109">
    <property type="reaction ID" value="UER00186"/>
</dbReference>
<dbReference type="Proteomes" id="UP000009080">
    <property type="component" value="Chromosome"/>
</dbReference>
<dbReference type="GO" id="GO:0004619">
    <property type="term" value="F:phosphoglycerate mutase activity"/>
    <property type="evidence" value="ECO:0007669"/>
    <property type="project" value="UniProtKB-EC"/>
</dbReference>
<dbReference type="GO" id="GO:0006094">
    <property type="term" value="P:gluconeogenesis"/>
    <property type="evidence" value="ECO:0007669"/>
    <property type="project" value="UniProtKB-UniRule"/>
</dbReference>
<dbReference type="GO" id="GO:0006096">
    <property type="term" value="P:glycolytic process"/>
    <property type="evidence" value="ECO:0007669"/>
    <property type="project" value="UniProtKB-UniRule"/>
</dbReference>
<dbReference type="CDD" id="cd07067">
    <property type="entry name" value="HP_PGM_like"/>
    <property type="match status" value="1"/>
</dbReference>
<dbReference type="FunFam" id="3.40.50.1240:FF:000003">
    <property type="entry name" value="2,3-bisphosphoglycerate-dependent phosphoglycerate mutase"/>
    <property type="match status" value="1"/>
</dbReference>
<dbReference type="Gene3D" id="3.40.50.1240">
    <property type="entry name" value="Phosphoglycerate mutase-like"/>
    <property type="match status" value="1"/>
</dbReference>
<dbReference type="HAMAP" id="MF_01039">
    <property type="entry name" value="PGAM_GpmA"/>
    <property type="match status" value="1"/>
</dbReference>
<dbReference type="InterPro" id="IPR013078">
    <property type="entry name" value="His_Pase_superF_clade-1"/>
</dbReference>
<dbReference type="InterPro" id="IPR029033">
    <property type="entry name" value="His_PPase_superfam"/>
</dbReference>
<dbReference type="InterPro" id="IPR001345">
    <property type="entry name" value="PG/BPGM_mutase_AS"/>
</dbReference>
<dbReference type="InterPro" id="IPR005952">
    <property type="entry name" value="Phosphogly_mut1"/>
</dbReference>
<dbReference type="NCBIfam" id="TIGR01258">
    <property type="entry name" value="pgm_1"/>
    <property type="match status" value="1"/>
</dbReference>
<dbReference type="NCBIfam" id="NF010713">
    <property type="entry name" value="PRK14115.1"/>
    <property type="match status" value="1"/>
</dbReference>
<dbReference type="PANTHER" id="PTHR11931">
    <property type="entry name" value="PHOSPHOGLYCERATE MUTASE"/>
    <property type="match status" value="1"/>
</dbReference>
<dbReference type="Pfam" id="PF00300">
    <property type="entry name" value="His_Phos_1"/>
    <property type="match status" value="1"/>
</dbReference>
<dbReference type="PIRSF" id="PIRSF000709">
    <property type="entry name" value="6PFK_2-Ptase"/>
    <property type="match status" value="1"/>
</dbReference>
<dbReference type="SMART" id="SM00855">
    <property type="entry name" value="PGAM"/>
    <property type="match status" value="1"/>
</dbReference>
<dbReference type="SUPFAM" id="SSF53254">
    <property type="entry name" value="Phosphoglycerate mutase-like"/>
    <property type="match status" value="1"/>
</dbReference>
<dbReference type="PROSITE" id="PS00175">
    <property type="entry name" value="PG_MUTASE"/>
    <property type="match status" value="1"/>
</dbReference>
<proteinExistence type="inferred from homology"/>
<keyword id="KW-0312">Gluconeogenesis</keyword>
<keyword id="KW-0324">Glycolysis</keyword>
<keyword id="KW-0413">Isomerase</keyword>
<keyword id="KW-1185">Reference proteome</keyword>